<organism>
    <name type="scientific">Rattus norvegicus</name>
    <name type="common">Rat</name>
    <dbReference type="NCBI Taxonomy" id="10116"/>
    <lineage>
        <taxon>Eukaryota</taxon>
        <taxon>Metazoa</taxon>
        <taxon>Chordata</taxon>
        <taxon>Craniata</taxon>
        <taxon>Vertebrata</taxon>
        <taxon>Euteleostomi</taxon>
        <taxon>Mammalia</taxon>
        <taxon>Eutheria</taxon>
        <taxon>Euarchontoglires</taxon>
        <taxon>Glires</taxon>
        <taxon>Rodentia</taxon>
        <taxon>Myomorpha</taxon>
        <taxon>Muroidea</taxon>
        <taxon>Muridae</taxon>
        <taxon>Murinae</taxon>
        <taxon>Rattus</taxon>
    </lineage>
</organism>
<reference key="1">
    <citation type="submission" date="1995-03" db="EMBL/GenBank/DDBJ databases">
        <authorList>
            <person name="Nuttall S.D."/>
            <person name="Sinding J."/>
            <person name="Hanson B."/>
            <person name="Hoogenraad N.J."/>
        </authorList>
    </citation>
    <scope>NUCLEOTIDE SEQUENCE [MRNA]</scope>
</reference>
<reference key="2">
    <citation type="submission" date="1995-08" db="EMBL/GenBank/DDBJ databases">
        <title>cDNA cloning and characterization of rat mitochondrial precursor receptor.</title>
        <authorList>
            <person name="Mihara K."/>
            <person name="Nomura N."/>
            <person name="Matsuo H."/>
            <person name="Sakaguchi M."/>
        </authorList>
    </citation>
    <scope>NUCLEOTIDE SEQUENCE [MRNA]</scope>
    <source>
        <tissue>Liver</tissue>
    </source>
</reference>
<reference key="3">
    <citation type="journal article" date="2004" name="Genome Res.">
        <title>The status, quality, and expansion of the NIH full-length cDNA project: the Mammalian Gene Collection (MGC).</title>
        <authorList>
            <consortium name="The MGC Project Team"/>
        </authorList>
    </citation>
    <scope>NUCLEOTIDE SEQUENCE [LARGE SCALE MRNA]</scope>
    <source>
        <tissue>Kidney</tissue>
    </source>
</reference>
<reference key="4">
    <citation type="journal article" date="2009" name="J. Biol. Chem.">
        <title>Mitochondrial targeting of cytochrome P450 proteins containing NH2-terminal chimeric signals involves an unusual TOM20/TOM22 bypass mechanism.</title>
        <authorList>
            <person name="Anandatheerthavarada H.K."/>
            <person name="Sepuri N.B."/>
            <person name="Avadhani N.G."/>
        </authorList>
    </citation>
    <scope>FUNCTION</scope>
</reference>
<reference key="5">
    <citation type="journal article" date="2012" name="Nat. Commun.">
        <title>Quantitative maps of protein phosphorylation sites across 14 different rat organs and tissues.</title>
        <authorList>
            <person name="Lundby A."/>
            <person name="Secher A."/>
            <person name="Lage K."/>
            <person name="Nordsborg N.B."/>
            <person name="Dmytriyev A."/>
            <person name="Lundby C."/>
            <person name="Olsen J.V."/>
        </authorList>
    </citation>
    <scope>PHOSPHORYLATION [LARGE SCALE ANALYSIS] AT SER-135 AND SER-138</scope>
    <scope>IDENTIFICATION BY MASS SPECTROMETRY [LARGE SCALE ANALYSIS]</scope>
</reference>
<reference key="6">
    <citation type="journal article" date="2018" name="J. Neurosci.">
        <title>Neuronal Preconditioning Requires the Mitophagic Activity of C-terminus of HSC70-Interacting Protein.</title>
        <authorList>
            <person name="Lizama B.N."/>
            <person name="Palubinsky A.M."/>
            <person name="Raveendran V.A."/>
            <person name="Moore A.M."/>
            <person name="Federspiel J.D."/>
            <person name="Codreanu S.G."/>
            <person name="Liebler D.C."/>
            <person name="McLaughlin B."/>
        </authorList>
    </citation>
    <scope>DEVELOPMENTAL STAGE</scope>
</reference>
<reference key="7">
    <citation type="journal article" date="2000" name="Cell">
        <title>Structural basis of presequence recognition by the mitochondrial protein import receptor Tom20.</title>
        <authorList>
            <person name="Abe Y."/>
            <person name="Shodai T."/>
            <person name="Muto T."/>
            <person name="Mihara K."/>
            <person name="Torii H."/>
            <person name="Nishikawa S."/>
            <person name="Endo T."/>
            <person name="Kohda D."/>
        </authorList>
    </citation>
    <scope>STRUCTURE BY NMR OF 51-145</scope>
</reference>
<feature type="chain" id="PRO_0000051541" description="Mitochondrial import receptor subunit TOM20 homolog">
    <location>
        <begin position="1"/>
        <end position="145"/>
    </location>
</feature>
<feature type="topological domain" description="Mitochondrial intermembrane" evidence="4">
    <location>
        <begin position="1"/>
        <end position="6"/>
    </location>
</feature>
<feature type="transmembrane region" description="Helical" evidence="4">
    <location>
        <begin position="7"/>
        <end position="24"/>
    </location>
</feature>
<feature type="topological domain" description="Cytoplasmic" evidence="4">
    <location>
        <begin position="25"/>
        <end position="145"/>
    </location>
</feature>
<feature type="modified residue" description="Phosphoserine" evidence="8">
    <location>
        <position position="135"/>
    </location>
</feature>
<feature type="modified residue" description="Phosphoserine" evidence="8">
    <location>
        <position position="138"/>
    </location>
</feature>
<feature type="cross-link" description="Glycyl lysine isopeptide (Lys-Gly) (interchain with G-Cter in ubiquitin)" evidence="2">
    <location>
        <position position="35"/>
    </location>
</feature>
<feature type="cross-link" description="Glycyl lysine isopeptide (Lys-Gly) (interchain with G-Cter in ubiquitin)" evidence="2">
    <location>
        <position position="56"/>
    </location>
</feature>
<feature type="cross-link" description="Glycyl lysine isopeptide (Lys-Gly) (interchain with G-Cter in ubiquitin)" evidence="2">
    <location>
        <position position="61"/>
    </location>
</feature>
<feature type="cross-link" description="Glycyl lysine isopeptide (Lys-Gly) (interchain with G-Cter in ubiquitin)" evidence="2">
    <location>
        <position position="68"/>
    </location>
</feature>
<feature type="sequence conflict" description="In Ref. 1; AAB01506." evidence="7" ref="1">
    <original>V</original>
    <variation>L</variation>
    <location>
        <position position="12"/>
    </location>
</feature>
<feature type="sequence conflict" description="In Ref. 1; AAB01506." evidence="7" ref="1">
    <original>S</original>
    <variation>G</variation>
    <location>
        <position position="30"/>
    </location>
</feature>
<feature type="sequence conflict" description="In Ref. 2; BAA09714." evidence="7" ref="2">
    <original>N</original>
    <variation>D</variation>
    <location>
        <position position="36"/>
    </location>
</feature>
<feature type="sequence conflict" description="In Ref. 2; BAA09714." evidence="7" ref="2">
    <original>A</original>
    <variation>G</variation>
    <location>
        <position position="140"/>
    </location>
</feature>
<feature type="strand" evidence="9">
    <location>
        <begin position="56"/>
        <end position="58"/>
    </location>
</feature>
<feature type="strand" evidence="9">
    <location>
        <begin position="60"/>
        <end position="62"/>
    </location>
</feature>
<feature type="helix" evidence="10">
    <location>
        <begin position="65"/>
        <end position="82"/>
    </location>
</feature>
<feature type="helix" evidence="10">
    <location>
        <begin position="86"/>
        <end position="98"/>
    </location>
</feature>
<feature type="helix" evidence="10">
    <location>
        <begin position="104"/>
        <end position="113"/>
    </location>
</feature>
<feature type="helix" evidence="10">
    <location>
        <begin position="116"/>
        <end position="123"/>
    </location>
</feature>
<feature type="helix" evidence="9">
    <location>
        <begin position="129"/>
        <end position="134"/>
    </location>
</feature>
<feature type="turn" evidence="9">
    <location>
        <begin position="135"/>
        <end position="140"/>
    </location>
</feature>
<evidence type="ECO:0000250" key="1"/>
<evidence type="ECO:0000250" key="2">
    <source>
        <dbReference type="UniProtKB" id="Q15388"/>
    </source>
</evidence>
<evidence type="ECO:0000250" key="3">
    <source>
        <dbReference type="UniProtKB" id="Q9DCC8"/>
    </source>
</evidence>
<evidence type="ECO:0000255" key="4"/>
<evidence type="ECO:0000269" key="5">
    <source>
    </source>
</evidence>
<evidence type="ECO:0000269" key="6">
    <source>
    </source>
</evidence>
<evidence type="ECO:0000305" key="7"/>
<evidence type="ECO:0007744" key="8">
    <source>
    </source>
</evidence>
<evidence type="ECO:0007829" key="9">
    <source>
        <dbReference type="PDB" id="1OM2"/>
    </source>
</evidence>
<evidence type="ECO:0007829" key="10">
    <source>
        <dbReference type="PDB" id="5AZ8"/>
    </source>
</evidence>
<keyword id="KW-0002">3D-structure</keyword>
<keyword id="KW-1017">Isopeptide bond</keyword>
<keyword id="KW-0472">Membrane</keyword>
<keyword id="KW-0496">Mitochondrion</keyword>
<keyword id="KW-1000">Mitochondrion outer membrane</keyword>
<keyword id="KW-0597">Phosphoprotein</keyword>
<keyword id="KW-0653">Protein transport</keyword>
<keyword id="KW-1185">Reference proteome</keyword>
<keyword id="KW-0812">Transmembrane</keyword>
<keyword id="KW-1133">Transmembrane helix</keyword>
<keyword id="KW-0813">Transport</keyword>
<keyword id="KW-0832">Ubl conjugation</keyword>
<dbReference type="EMBL" id="U21871">
    <property type="protein sequence ID" value="AAB01506.1"/>
    <property type="molecule type" value="mRNA"/>
</dbReference>
<dbReference type="EMBL" id="D63411">
    <property type="protein sequence ID" value="BAA09714.1"/>
    <property type="molecule type" value="mRNA"/>
</dbReference>
<dbReference type="EMBL" id="BC078715">
    <property type="protein sequence ID" value="AAH78715.1"/>
    <property type="molecule type" value="mRNA"/>
</dbReference>
<dbReference type="RefSeq" id="NP_690918.2">
    <property type="nucleotide sequence ID" value="NM_152935.2"/>
</dbReference>
<dbReference type="PDB" id="1OM2">
    <property type="method" value="NMR"/>
    <property type="chains" value="A=51-145"/>
</dbReference>
<dbReference type="PDB" id="2V1S">
    <property type="method" value="X-ray"/>
    <property type="resolution" value="2.05 A"/>
    <property type="chains" value="A/B/C/D/E/F/G=59-126"/>
</dbReference>
<dbReference type="PDB" id="2V1T">
    <property type="method" value="X-ray"/>
    <property type="resolution" value="1.92 A"/>
    <property type="chains" value="A/B=59-126"/>
</dbReference>
<dbReference type="PDB" id="3AWR">
    <property type="method" value="X-ray"/>
    <property type="resolution" value="2.00 A"/>
    <property type="chains" value="A/B=59-126"/>
</dbReference>
<dbReference type="PDB" id="3AX2">
    <property type="method" value="X-ray"/>
    <property type="resolution" value="1.90 A"/>
    <property type="chains" value="A/C/E/G=59-126"/>
</dbReference>
<dbReference type="PDB" id="3AX3">
    <property type="method" value="X-ray"/>
    <property type="resolution" value="2.10 A"/>
    <property type="chains" value="A/C/E/G=59-126"/>
</dbReference>
<dbReference type="PDB" id="3AX5">
    <property type="method" value="X-ray"/>
    <property type="resolution" value="2.20 A"/>
    <property type="chains" value="A/C=59-126"/>
</dbReference>
<dbReference type="PDB" id="5AZ6">
    <property type="method" value="X-ray"/>
    <property type="resolution" value="2.56 A"/>
    <property type="chains" value="A/B=65-126"/>
</dbReference>
<dbReference type="PDB" id="5AZ7">
    <property type="method" value="X-ray"/>
    <property type="resolution" value="1.96 A"/>
    <property type="chains" value="A=65-126"/>
</dbReference>
<dbReference type="PDB" id="5AZ8">
    <property type="method" value="X-ray"/>
    <property type="resolution" value="1.70 A"/>
    <property type="chains" value="A=65-126"/>
</dbReference>
<dbReference type="PDB" id="5AZ9">
    <property type="method" value="X-ray"/>
    <property type="resolution" value="1.82 A"/>
    <property type="chains" value="A=65-126"/>
</dbReference>
<dbReference type="PDBsum" id="1OM2"/>
<dbReference type="PDBsum" id="2V1S"/>
<dbReference type="PDBsum" id="2V1T"/>
<dbReference type="PDBsum" id="3AWR"/>
<dbReference type="PDBsum" id="3AX2"/>
<dbReference type="PDBsum" id="3AX3"/>
<dbReference type="PDBsum" id="3AX5"/>
<dbReference type="PDBsum" id="5AZ6"/>
<dbReference type="PDBsum" id="5AZ7"/>
<dbReference type="PDBsum" id="5AZ8"/>
<dbReference type="PDBsum" id="5AZ9"/>
<dbReference type="BMRB" id="Q62760"/>
<dbReference type="SMR" id="Q62760"/>
<dbReference type="BioGRID" id="251753">
    <property type="interactions" value="4"/>
</dbReference>
<dbReference type="CORUM" id="Q62760"/>
<dbReference type="FunCoup" id="Q62760">
    <property type="interactions" value="3395"/>
</dbReference>
<dbReference type="STRING" id="10116.ENSRNOP00000027088"/>
<dbReference type="GlyGen" id="Q62760">
    <property type="glycosylation" value="1 site, 1 O-linked glycan (1 site)"/>
</dbReference>
<dbReference type="iPTMnet" id="Q62760"/>
<dbReference type="PhosphoSitePlus" id="Q62760"/>
<dbReference type="PaxDb" id="10116-ENSRNOP00000027088"/>
<dbReference type="Ensembl" id="ENSRNOT00000027088.3">
    <property type="protein sequence ID" value="ENSRNOP00000027088.2"/>
    <property type="gene ID" value="ENSRNOG00000019980.3"/>
</dbReference>
<dbReference type="GeneID" id="266601"/>
<dbReference type="KEGG" id="rno:266601"/>
<dbReference type="UCSC" id="RGD:708467">
    <property type="organism name" value="rat"/>
</dbReference>
<dbReference type="AGR" id="RGD:708467"/>
<dbReference type="CTD" id="9804"/>
<dbReference type="RGD" id="708467">
    <property type="gene designation" value="Tomm20"/>
</dbReference>
<dbReference type="eggNOG" id="KOG4056">
    <property type="taxonomic scope" value="Eukaryota"/>
</dbReference>
<dbReference type="GeneTree" id="ENSGT00390000011698"/>
<dbReference type="HOGENOM" id="CLU_100000_0_0_1"/>
<dbReference type="InParanoid" id="Q62760"/>
<dbReference type="OMA" id="PPPIFQI"/>
<dbReference type="OrthoDB" id="2154253at2759"/>
<dbReference type="PhylomeDB" id="Q62760"/>
<dbReference type="TreeFam" id="TF106200"/>
<dbReference type="Reactome" id="R-RNO-5205685">
    <property type="pathway name" value="PINK1-PRKN Mediated Mitophagy"/>
</dbReference>
<dbReference type="Reactome" id="R-RNO-5689880">
    <property type="pathway name" value="Ub-specific processing proteases"/>
</dbReference>
<dbReference type="EvolutionaryTrace" id="Q62760"/>
<dbReference type="PRO" id="PR:Q62760"/>
<dbReference type="Proteomes" id="UP000002494">
    <property type="component" value="Chromosome 19"/>
</dbReference>
<dbReference type="Bgee" id="ENSRNOG00000019980">
    <property type="expression patterns" value="Expressed in ovary and 20 other cell types or tissues"/>
</dbReference>
<dbReference type="GO" id="GO:0071944">
    <property type="term" value="C:cell periphery"/>
    <property type="evidence" value="ECO:0000266"/>
    <property type="project" value="RGD"/>
</dbReference>
<dbReference type="GO" id="GO:0140494">
    <property type="term" value="C:migrasome"/>
    <property type="evidence" value="ECO:0000266"/>
    <property type="project" value="RGD"/>
</dbReference>
<dbReference type="GO" id="GO:0044233">
    <property type="term" value="C:mitochondria-associated endoplasmic reticulum membrane contact site"/>
    <property type="evidence" value="ECO:0000266"/>
    <property type="project" value="RGD"/>
</dbReference>
<dbReference type="GO" id="GO:0005740">
    <property type="term" value="C:mitochondrial envelope"/>
    <property type="evidence" value="ECO:0000266"/>
    <property type="project" value="RGD"/>
</dbReference>
<dbReference type="GO" id="GO:0005741">
    <property type="term" value="C:mitochondrial outer membrane"/>
    <property type="evidence" value="ECO:0000314"/>
    <property type="project" value="UniProtKB"/>
</dbReference>
<dbReference type="GO" id="GO:0005742">
    <property type="term" value="C:mitochondrial outer membrane translocase complex"/>
    <property type="evidence" value="ECO:0000318"/>
    <property type="project" value="GO_Central"/>
</dbReference>
<dbReference type="GO" id="GO:0005739">
    <property type="term" value="C:mitochondrion"/>
    <property type="evidence" value="ECO:0000266"/>
    <property type="project" value="RGD"/>
</dbReference>
<dbReference type="GO" id="GO:0097225">
    <property type="term" value="C:sperm midpiece"/>
    <property type="evidence" value="ECO:0000250"/>
    <property type="project" value="UniProtKB"/>
</dbReference>
<dbReference type="GO" id="GO:0030943">
    <property type="term" value="F:mitochondrion targeting sequence binding"/>
    <property type="evidence" value="ECO:0000314"/>
    <property type="project" value="RGD"/>
</dbReference>
<dbReference type="GO" id="GO:0015450">
    <property type="term" value="F:protein-transporting ATPase activity"/>
    <property type="evidence" value="ECO:0000266"/>
    <property type="project" value="RGD"/>
</dbReference>
<dbReference type="GO" id="GO:0051082">
    <property type="term" value="F:unfolded protein binding"/>
    <property type="evidence" value="ECO:0000266"/>
    <property type="project" value="RGD"/>
</dbReference>
<dbReference type="GO" id="GO:0006886">
    <property type="term" value="P:intracellular protein transport"/>
    <property type="evidence" value="ECO:0007669"/>
    <property type="project" value="InterPro"/>
</dbReference>
<dbReference type="GO" id="GO:0030150">
    <property type="term" value="P:protein import into mitochondrial matrix"/>
    <property type="evidence" value="ECO:0000318"/>
    <property type="project" value="GO_Central"/>
</dbReference>
<dbReference type="GO" id="GO:0006626">
    <property type="term" value="P:protein targeting to mitochondrion"/>
    <property type="evidence" value="ECO:0000315"/>
    <property type="project" value="UniProtKB"/>
</dbReference>
<dbReference type="GO" id="GO:1905242">
    <property type="term" value="P:response to 3,3',5-triiodo-L-thyronine"/>
    <property type="evidence" value="ECO:0000270"/>
    <property type="project" value="RGD"/>
</dbReference>
<dbReference type="GO" id="GO:0014850">
    <property type="term" value="P:response to muscle activity"/>
    <property type="evidence" value="ECO:0000270"/>
    <property type="project" value="RGD"/>
</dbReference>
<dbReference type="GO" id="GO:0016031">
    <property type="term" value="P:tRNA import into mitochondrion"/>
    <property type="evidence" value="ECO:0000318"/>
    <property type="project" value="GO_Central"/>
</dbReference>
<dbReference type="FunFam" id="1.20.960.10:FF:000001">
    <property type="entry name" value="Mitochondrial import receptor subunit TOM20 homolog"/>
    <property type="match status" value="1"/>
</dbReference>
<dbReference type="Gene3D" id="1.20.960.10">
    <property type="entry name" value="Mitochondrial outer membrane translocase complex, subunit Tom20 domain"/>
    <property type="match status" value="1"/>
</dbReference>
<dbReference type="InterPro" id="IPR002056">
    <property type="entry name" value="MAS20"/>
</dbReference>
<dbReference type="InterPro" id="IPR022422">
    <property type="entry name" value="MAS20_rcpt_metazoan"/>
</dbReference>
<dbReference type="InterPro" id="IPR023392">
    <property type="entry name" value="Tom20_dom_sf"/>
</dbReference>
<dbReference type="NCBIfam" id="TIGR00985">
    <property type="entry name" value="3a0801s04tom"/>
    <property type="match status" value="1"/>
</dbReference>
<dbReference type="PANTHER" id="PTHR12430">
    <property type="entry name" value="MITOCHONDRIAL IMPORT RECEPTOR SUBUNIT TOM20"/>
    <property type="match status" value="1"/>
</dbReference>
<dbReference type="PANTHER" id="PTHR12430:SF2">
    <property type="entry name" value="MITOCHONDRIAL IMPORT RECEPTOR SUBUNIT TOM20 HOMOLOG"/>
    <property type="match status" value="1"/>
</dbReference>
<dbReference type="Pfam" id="PF02064">
    <property type="entry name" value="MAS20"/>
    <property type="match status" value="1"/>
</dbReference>
<dbReference type="PIRSF" id="PIRSF037707">
    <property type="entry name" value="MAS20_rcpt"/>
    <property type="match status" value="1"/>
</dbReference>
<dbReference type="PRINTS" id="PR01989">
    <property type="entry name" value="EUOM20RECPTR"/>
</dbReference>
<dbReference type="PRINTS" id="PR00351">
    <property type="entry name" value="OM20RECEPTOR"/>
</dbReference>
<dbReference type="SUPFAM" id="SSF47157">
    <property type="entry name" value="Mitochondrial import receptor subunit Tom20"/>
    <property type="match status" value="1"/>
</dbReference>
<proteinExistence type="evidence at protein level"/>
<gene>
    <name type="primary">Tomm20</name>
</gene>
<sequence length="145" mass="16284">MVGRNSAIAAGVCGALFIGYCIYFDRKRRSDPNFKNRLRERRKKQKLAKERAGLSKLPDLKDAEAVQKFFLEEIQLGEELLAQGDYEKGVDHLTNAIAVCGQPQQLLQVLQQTLPPPVFQMLLTKLPTISQRIVSAQSLAEDDVE</sequence>
<name>TOM20_RAT</name>
<accession>Q62760</accession>
<accession>O08517</accession>
<accession>Q63804</accession>
<accession>Q6AZ66</accession>
<comment type="function">
    <text evidence="1 5">Central component of the receptor complex responsible for the recognition and translocation of cytosolically synthesized mitochondrial preproteins. Together with TOM22 functions as the transit peptide receptor at the surface of the mitochondrion outer membrane and facilitates the movement of preproteins into the TOM40 translocation pore (By similarity). Required for the translocation across the mitochondrial outer membrane of cytochrome P450 monooxygenases.</text>
</comment>
<comment type="subunit">
    <text evidence="2 3">Forms part of the preprotein translocase complex of the outer mitochondrial membrane (TOM complex) which consists of at least 7 different proteins (TOMM5, TOMM6, TOMM7, TOMM20, TOMM22, TOMM40 and TOMM70). Interacts with TOM22. Interacts with APEX1 (By similarity). Interacts with TBC1D21 (By similarity). Upon mitochondrial depolarization, interacts with PINK1; the interaction is required for PINK1-TOM-TIM23 supercomplex formation which is critical for PINK1 stabilization at the outer mitochondrial membrane, kinase activation and downstream mitophagy (By similarity).</text>
</comment>
<comment type="subcellular location">
    <subcellularLocation>
        <location evidence="2">Mitochondrion outer membrane</location>
        <topology evidence="4">Single-pass membrane protein</topology>
    </subcellularLocation>
</comment>
<comment type="developmental stage">
    <text evidence="6">Expressed in neurons at 18.5 dpc (at protein level).</text>
</comment>
<comment type="PTM">
    <text evidence="2">Ubiquitinated by PRKN during mitophagy, leading to its degradation and enhancement of mitophagy. Deubiquitinated by USP30.</text>
</comment>
<comment type="similarity">
    <text evidence="7">Belongs to the Tom20 family.</text>
</comment>
<protein>
    <recommendedName>
        <fullName>Mitochondrial import receptor subunit TOM20 homolog</fullName>
    </recommendedName>
    <alternativeName>
        <fullName>Mitochondrial 20 kDa outer membrane protein</fullName>
    </alternativeName>
    <alternativeName>
        <fullName>Outer mitochondrial membrane receptor Tom20</fullName>
    </alternativeName>
</protein>